<keyword id="KW-0903">Direct protein sequencing</keyword>
<keyword id="KW-1015">Disulfide bond</keyword>
<keyword id="KW-0872">Ion channel impairing toxin</keyword>
<keyword id="KW-0528">Neurotoxin</keyword>
<keyword id="KW-0964">Secreted</keyword>
<keyword id="KW-0800">Toxin</keyword>
<keyword id="KW-0738">Voltage-gated sodium channel impairing toxin</keyword>
<protein>
    <recommendedName>
        <fullName>Insect toxin AaHIT5</fullName>
        <shortName>AaH IT5</shortName>
        <shortName>AaIT5</shortName>
        <shortName>Insect toxin 5</shortName>
    </recommendedName>
</protein>
<sequence>DGYIKRHDGCKVTCLINDNYCDTECKREGGSYGYCYSVGFACWCEGLPDDKAWKSETNTCD</sequence>
<name>SIX5_ANDAU</name>
<reference key="1">
    <citation type="journal article" date="1997" name="Eur. J. Biochem.">
        <title>Anti-insect toxin 5 (AaIT5) from Androctonus australis.</title>
        <authorList>
            <person name="Nakagawa Y."/>
            <person name="Lee Y.M."/>
            <person name="Lehmberg E."/>
            <person name="Herrmann R."/>
            <person name="Herrmann R."/>
            <person name="Moskowitz H."/>
            <person name="Jones A.D."/>
            <person name="Hammock B.D."/>
        </authorList>
    </citation>
    <scope>PROTEIN SEQUENCE</scope>
    <scope>FUNCTION</scope>
    <source>
        <strain>Hector</strain>
        <tissue>Venom</tissue>
    </source>
</reference>
<reference key="2">
    <citation type="journal article" date="1998" name="Arch. Insect Biochem. Physiol.">
        <title>Rapid purification and molecular modeling of AaIT peptides from venom of Androctonus australis.</title>
        <authorList>
            <person name="Nakagawa Y."/>
            <person name="Sadilek M."/>
            <person name="Lehmberg E."/>
            <person name="Herrmann R."/>
            <person name="Herrmann R."/>
            <person name="Moskowitz H."/>
            <person name="Lee Y.M."/>
            <person name="Thomas B.A."/>
            <person name="Shimizu R."/>
            <person name="Kuroda M."/>
            <person name="Jones A.D."/>
            <person name="Hammock B.D."/>
        </authorList>
    </citation>
    <scope>3D-STRUCTURE MODELING</scope>
    <scope>MASS SPECTROMETRY</scope>
</reference>
<proteinExistence type="evidence at protein level"/>
<evidence type="ECO:0000250" key="1"/>
<evidence type="ECO:0000255" key="2">
    <source>
        <dbReference type="PROSITE-ProRule" id="PRU01210"/>
    </source>
</evidence>
<evidence type="ECO:0000269" key="3">
    <source>
    </source>
</evidence>
<evidence type="ECO:0000269" key="4">
    <source>
    </source>
</evidence>
<evidence type="ECO:0000305" key="5"/>
<accession>P81504</accession>
<comment type="function">
    <text evidence="1 3">Excitatory insect toxins induce a spastic paralysis. They bind voltage-independently to sodium channels (Nav) and shift the voltage of activation toward more negative potentials thereby affecting sodium channel activation and promoting spontaneous and repetitive firing (By similarity). This toxin elicits excitatory activity with no flaccid paralysis despite its high degree of sequence similarity with other depressant insect toxins. This toxin is active only on insects.</text>
</comment>
<comment type="subcellular location">
    <subcellularLocation>
        <location>Secreted</location>
    </subcellularLocation>
</comment>
<comment type="tissue specificity">
    <text>Expressed by the venom gland.</text>
</comment>
<comment type="domain">
    <text evidence="5">Has the structural arrangement of an alpha-helix connected to antiparallel beta-sheets by disulfide bonds (CS-alpha/beta).</text>
</comment>
<comment type="mass spectrometry"/>
<comment type="similarity">
    <text evidence="5">Belongs to the long (4 C-C) scorpion toxin superfamily. Sodium channel inhibitor family. Beta subfamily.</text>
</comment>
<dbReference type="SMR" id="P81504"/>
<dbReference type="GO" id="GO:0005576">
    <property type="term" value="C:extracellular region"/>
    <property type="evidence" value="ECO:0007669"/>
    <property type="project" value="UniProtKB-SubCell"/>
</dbReference>
<dbReference type="GO" id="GO:0019871">
    <property type="term" value="F:sodium channel inhibitor activity"/>
    <property type="evidence" value="ECO:0007669"/>
    <property type="project" value="InterPro"/>
</dbReference>
<dbReference type="GO" id="GO:0090729">
    <property type="term" value="F:toxin activity"/>
    <property type="evidence" value="ECO:0007669"/>
    <property type="project" value="UniProtKB-KW"/>
</dbReference>
<dbReference type="GO" id="GO:0006952">
    <property type="term" value="P:defense response"/>
    <property type="evidence" value="ECO:0007669"/>
    <property type="project" value="InterPro"/>
</dbReference>
<dbReference type="CDD" id="cd23106">
    <property type="entry name" value="neurotoxins_LC_scorpion"/>
    <property type="match status" value="1"/>
</dbReference>
<dbReference type="FunFam" id="3.30.30.10:FF:000002">
    <property type="entry name" value="Alpha-like toxin BmK-M1"/>
    <property type="match status" value="1"/>
</dbReference>
<dbReference type="Gene3D" id="3.30.30.10">
    <property type="entry name" value="Knottin, scorpion toxin-like"/>
    <property type="match status" value="1"/>
</dbReference>
<dbReference type="InterPro" id="IPR044062">
    <property type="entry name" value="LCN-type_CS_alpha_beta_dom"/>
</dbReference>
<dbReference type="InterPro" id="IPR003614">
    <property type="entry name" value="Scorpion_toxin-like"/>
</dbReference>
<dbReference type="InterPro" id="IPR036574">
    <property type="entry name" value="Scorpion_toxin-like_sf"/>
</dbReference>
<dbReference type="InterPro" id="IPR018218">
    <property type="entry name" value="Scorpion_toxinL"/>
</dbReference>
<dbReference type="InterPro" id="IPR002061">
    <property type="entry name" value="Scorpion_toxinL/defensin"/>
</dbReference>
<dbReference type="Pfam" id="PF00537">
    <property type="entry name" value="Toxin_3"/>
    <property type="match status" value="1"/>
</dbReference>
<dbReference type="PRINTS" id="PR00285">
    <property type="entry name" value="SCORPNTOXIN"/>
</dbReference>
<dbReference type="SMART" id="SM00505">
    <property type="entry name" value="Knot1"/>
    <property type="match status" value="1"/>
</dbReference>
<dbReference type="SUPFAM" id="SSF57095">
    <property type="entry name" value="Scorpion toxin-like"/>
    <property type="match status" value="1"/>
</dbReference>
<dbReference type="PROSITE" id="PS51863">
    <property type="entry name" value="LCN_CSAB"/>
    <property type="match status" value="1"/>
</dbReference>
<feature type="chain" id="PRO_0000066709" description="Insect toxin AaHIT5">
    <location>
        <begin position="1"/>
        <end position="61"/>
    </location>
</feature>
<feature type="domain" description="LCN-type CS-alpha/beta" evidence="2">
    <location>
        <begin position="1"/>
        <end position="61"/>
    </location>
</feature>
<feature type="disulfide bond" evidence="2">
    <location>
        <begin position="10"/>
        <end position="60"/>
    </location>
</feature>
<feature type="disulfide bond" evidence="2">
    <location>
        <begin position="14"/>
        <end position="35"/>
    </location>
</feature>
<feature type="disulfide bond" evidence="2">
    <location>
        <begin position="21"/>
        <end position="42"/>
    </location>
</feature>
<feature type="disulfide bond" evidence="2">
    <location>
        <begin position="25"/>
        <end position="44"/>
    </location>
</feature>
<organism>
    <name type="scientific">Androctonus australis</name>
    <name type="common">Sahara scorpion</name>
    <dbReference type="NCBI Taxonomy" id="6858"/>
    <lineage>
        <taxon>Eukaryota</taxon>
        <taxon>Metazoa</taxon>
        <taxon>Ecdysozoa</taxon>
        <taxon>Arthropoda</taxon>
        <taxon>Chelicerata</taxon>
        <taxon>Arachnida</taxon>
        <taxon>Scorpiones</taxon>
        <taxon>Buthida</taxon>
        <taxon>Buthoidea</taxon>
        <taxon>Buthidae</taxon>
        <taxon>Androctonus</taxon>
    </lineage>
</organism>